<keyword id="KW-0012">Acyltransferase</keyword>
<keyword id="KW-0998">Cell outer membrane</keyword>
<keyword id="KW-0472">Membrane</keyword>
<keyword id="KW-0732">Signal</keyword>
<keyword id="KW-0808">Transferase</keyword>
<sequence>MSYKHLISACIFSSLCLGQVNAVLAEDKLPPSNTSTGQHSELSVDNDNLWQRLLRNISLAWDSPNQELYIPLNTWHNRWTYDDDKIESYNERPWGIGYGKYRYDENNNWHAVYAMAFMDSHNEVEPIIGYGYQKMWIPAEMDGWRFGVGFTASITARHEYHYIPIPLPLPLISIEYNKFSLQTTYIPGTYNNGNVLFTWMRWQF</sequence>
<accession>A1JM47</accession>
<dbReference type="EC" id="2.3.1.251" evidence="1"/>
<dbReference type="EMBL" id="AM286415">
    <property type="protein sequence ID" value="CAL11832.1"/>
    <property type="molecule type" value="Genomic_DNA"/>
</dbReference>
<dbReference type="RefSeq" id="WP_005170533.1">
    <property type="nucleotide sequence ID" value="NC_008800.1"/>
</dbReference>
<dbReference type="RefSeq" id="YP_001006040.1">
    <property type="nucleotide sequence ID" value="NC_008800.1"/>
</dbReference>
<dbReference type="SMR" id="A1JM47"/>
<dbReference type="KEGG" id="yen:YE1762"/>
<dbReference type="PATRIC" id="fig|393305.7.peg.1913"/>
<dbReference type="eggNOG" id="ENOG502Z7SY">
    <property type="taxonomic scope" value="Bacteria"/>
</dbReference>
<dbReference type="HOGENOM" id="CLU_104099_0_0_6"/>
<dbReference type="OrthoDB" id="9156803at2"/>
<dbReference type="Proteomes" id="UP000000642">
    <property type="component" value="Chromosome"/>
</dbReference>
<dbReference type="GO" id="GO:0009279">
    <property type="term" value="C:cell outer membrane"/>
    <property type="evidence" value="ECO:0000250"/>
    <property type="project" value="UniProtKB"/>
</dbReference>
<dbReference type="GO" id="GO:0016416">
    <property type="term" value="F:O-palmitoyltransferase activity"/>
    <property type="evidence" value="ECO:0000250"/>
    <property type="project" value="UniProtKB"/>
</dbReference>
<dbReference type="GO" id="GO:0009245">
    <property type="term" value="P:lipid A biosynthetic process"/>
    <property type="evidence" value="ECO:0000250"/>
    <property type="project" value="UniProtKB"/>
</dbReference>
<dbReference type="FunFam" id="2.40.160.20:FF:000002">
    <property type="entry name" value="Lipid A palmitoyltransferase PagP"/>
    <property type="match status" value="1"/>
</dbReference>
<dbReference type="Gene3D" id="2.40.160.20">
    <property type="match status" value="1"/>
</dbReference>
<dbReference type="HAMAP" id="MF_00837">
    <property type="entry name" value="PagP_transferase"/>
    <property type="match status" value="1"/>
</dbReference>
<dbReference type="InterPro" id="IPR009746">
    <property type="entry name" value="LipidA_acyl_PagP"/>
</dbReference>
<dbReference type="InterPro" id="IPR011250">
    <property type="entry name" value="OMP/PagP_b-brl"/>
</dbReference>
<dbReference type="NCBIfam" id="NF008271">
    <property type="entry name" value="PRK11045.1"/>
    <property type="match status" value="1"/>
</dbReference>
<dbReference type="Pfam" id="PF07017">
    <property type="entry name" value="PagP"/>
    <property type="match status" value="1"/>
</dbReference>
<dbReference type="SUPFAM" id="SSF56925">
    <property type="entry name" value="OMPA-like"/>
    <property type="match status" value="1"/>
</dbReference>
<organism>
    <name type="scientific">Yersinia enterocolitica serotype O:8 / biotype 1B (strain NCTC 13174 / 8081)</name>
    <dbReference type="NCBI Taxonomy" id="393305"/>
    <lineage>
        <taxon>Bacteria</taxon>
        <taxon>Pseudomonadati</taxon>
        <taxon>Pseudomonadota</taxon>
        <taxon>Gammaproteobacteria</taxon>
        <taxon>Enterobacterales</taxon>
        <taxon>Yersiniaceae</taxon>
        <taxon>Yersinia</taxon>
    </lineage>
</organism>
<reference key="1">
    <citation type="journal article" date="2006" name="PLoS Genet.">
        <title>The complete genome sequence and comparative genome analysis of the high pathogenicity Yersinia enterocolitica strain 8081.</title>
        <authorList>
            <person name="Thomson N.R."/>
            <person name="Howard S."/>
            <person name="Wren B.W."/>
            <person name="Holden M.T.G."/>
            <person name="Crossman L."/>
            <person name="Challis G.L."/>
            <person name="Churcher C."/>
            <person name="Mungall K."/>
            <person name="Brooks K."/>
            <person name="Chillingworth T."/>
            <person name="Feltwell T."/>
            <person name="Abdellah Z."/>
            <person name="Hauser H."/>
            <person name="Jagels K."/>
            <person name="Maddison M."/>
            <person name="Moule S."/>
            <person name="Sanders M."/>
            <person name="Whitehead S."/>
            <person name="Quail M.A."/>
            <person name="Dougan G."/>
            <person name="Parkhill J."/>
            <person name="Prentice M.B."/>
        </authorList>
    </citation>
    <scope>NUCLEOTIDE SEQUENCE [LARGE SCALE GENOMIC DNA]</scope>
    <source>
        <strain>NCTC 13174 / 8081</strain>
    </source>
</reference>
<reference key="2">
    <citation type="journal article" date="1998" name="Cell">
        <title>Lipid A acylation and bacterial resistance against vertebrate antimicrobial peptides.</title>
        <authorList>
            <person name="Guo L."/>
            <person name="Lim K.B."/>
            <person name="Poduje C.M."/>
            <person name="Morad D."/>
            <person name="Gunn J.S."/>
            <person name="Hackett M."/>
            <person name="Miller S.I."/>
        </authorList>
    </citation>
    <scope>INDUCTION</scope>
</reference>
<evidence type="ECO:0000255" key="1">
    <source>
        <dbReference type="HAMAP-Rule" id="MF_00837"/>
    </source>
</evidence>
<evidence type="ECO:0000269" key="2">
    <source>
    </source>
</evidence>
<evidence type="ECO:0000305" key="3"/>
<feature type="signal peptide" evidence="1">
    <location>
        <begin position="1"/>
        <end position="25"/>
    </location>
</feature>
<feature type="chain" id="PRO_0000414479" description="Lipid A acyltransferase PagP">
    <location>
        <begin position="26"/>
        <end position="204"/>
    </location>
</feature>
<feature type="active site" evidence="1">
    <location>
        <position position="76"/>
    </location>
</feature>
<feature type="active site" evidence="1">
    <location>
        <position position="119"/>
    </location>
</feature>
<feature type="active site" evidence="1">
    <location>
        <position position="120"/>
    </location>
</feature>
<feature type="site" description="Role in lipopolysaccharide recognition" evidence="1">
    <location>
        <position position="85"/>
    </location>
</feature>
<feature type="site" description="Role in the phospholipid gating" evidence="1">
    <location>
        <position position="190"/>
    </location>
</feature>
<name>PAGP_YERE8</name>
<protein>
    <recommendedName>
        <fullName evidence="1">Lipid A acyltransferase PagP</fullName>
        <ecNumber evidence="1">2.3.1.251</ecNumber>
    </recommendedName>
    <alternativeName>
        <fullName evidence="1">Lipid A acylation protein</fullName>
    </alternativeName>
</protein>
<proteinExistence type="evidence at transcript level"/>
<comment type="function">
    <text evidence="1">Transfers a fatty acid residue from the sn-1 position of a phospholipid to the N-linked hydroxyfatty acid chain on the proximal unit of lipid A or its precursors.</text>
</comment>
<comment type="catalytic activity">
    <reaction evidence="1">
        <text>a lipid A + a 1,2-diacyl-sn-glycero-3-phosphocholine = a hepta-acyl lipid A + a 2-acyl-sn-glycero-3-phosphocholine</text>
        <dbReference type="Rhea" id="RHEA:74275"/>
        <dbReference type="ChEBI" id="CHEBI:57643"/>
        <dbReference type="ChEBI" id="CHEBI:57875"/>
        <dbReference type="ChEBI" id="CHEBI:193141"/>
        <dbReference type="ChEBI" id="CHEBI:193142"/>
        <dbReference type="EC" id="2.3.1.251"/>
    </reaction>
</comment>
<comment type="catalytic activity">
    <reaction evidence="1">
        <text>a lipid IVA + a 1,2-diacyl-sn-glycero-3-phosphocholine = a lipid IVB + a 2-acyl-sn-glycero-3-phosphocholine</text>
        <dbReference type="Rhea" id="RHEA:74279"/>
        <dbReference type="ChEBI" id="CHEBI:57643"/>
        <dbReference type="ChEBI" id="CHEBI:57875"/>
        <dbReference type="ChEBI" id="CHEBI:176425"/>
        <dbReference type="ChEBI" id="CHEBI:193143"/>
        <dbReference type="EC" id="2.3.1.251"/>
    </reaction>
</comment>
<comment type="catalytic activity">
    <reaction evidence="1">
        <text>a lipid IIA + a 1,2-diacyl-sn-glycero-3-phosphocholine = a lipid IIB + a 2-acyl-sn-glycero-3-phosphocholine</text>
        <dbReference type="Rhea" id="RHEA:74283"/>
        <dbReference type="ChEBI" id="CHEBI:57643"/>
        <dbReference type="ChEBI" id="CHEBI:57875"/>
        <dbReference type="ChEBI" id="CHEBI:193144"/>
        <dbReference type="ChEBI" id="CHEBI:193145"/>
        <dbReference type="EC" id="2.3.1.251"/>
    </reaction>
</comment>
<comment type="subunit">
    <text evidence="1">Homodimer.</text>
</comment>
<comment type="subcellular location">
    <subcellularLocation>
        <location evidence="1">Cell outer membrane</location>
    </subcellularLocation>
</comment>
<comment type="induction">
    <text evidence="2">Induced during magnesium-deficient conditions.</text>
</comment>
<comment type="similarity">
    <text evidence="1 3">Belongs to the lipid A palmitoyltransferase family.</text>
</comment>
<gene>
    <name evidence="1" type="primary">pagP</name>
    <name type="synonym">crcA</name>
    <name type="ordered locus">YE1762</name>
</gene>